<organism>
    <name type="scientific">Homo sapiens</name>
    <name type="common">Human</name>
    <dbReference type="NCBI Taxonomy" id="9606"/>
    <lineage>
        <taxon>Eukaryota</taxon>
        <taxon>Metazoa</taxon>
        <taxon>Chordata</taxon>
        <taxon>Craniata</taxon>
        <taxon>Vertebrata</taxon>
        <taxon>Euteleostomi</taxon>
        <taxon>Mammalia</taxon>
        <taxon>Eutheria</taxon>
        <taxon>Euarchontoglires</taxon>
        <taxon>Primates</taxon>
        <taxon>Haplorrhini</taxon>
        <taxon>Catarrhini</taxon>
        <taxon>Hominidae</taxon>
        <taxon>Homo</taxon>
    </lineage>
</organism>
<proteinExistence type="evidence at protein level"/>
<comment type="function">
    <text evidence="1 6 8 9 10 12 14">K(+) channel that conducts voltage-dependent outward rectifying currents upon membrane depolarization. Voltage sensing is coupled to K(+) electrochemical gradient in an 'ion flux gating' mode where outward but not inward ion flow opens the gate. Converts to voltage-independent 'leak' conductance mode upon stimulation by various stimuli including mechanical membrane stretch, basic pH, heat and lipids (PubMed:22282805, PubMed:25471887, PubMed:25500157, PubMed:26919430, PubMed:30290154, PubMed:38605031). Homo- and heterodimerizes to form functional channels with distinct regulatory and gating properties (PubMed:26919430). At trigeminal A-beta afferent nerves, the heterodimer of KCNK2/TREK-1 and KCNK4/TRAAK is mostly coexpressed at nodes of Ranvier where it conducts voltage-independent mechanosensitive and thermosensitive currents, allowing rapid action potential repolarization, high speed and high frequence saltatory conduction on myelinated nerves to ensure prompt sensory responses (By similarity). Permeable to other monovalent cations such as Rb(+) and Cs(+) (PubMed:26919430).</text>
</comment>
<comment type="catalytic activity">
    <reaction evidence="6 10 14">
        <text>K(+)(in) = K(+)(out)</text>
        <dbReference type="Rhea" id="RHEA:29463"/>
        <dbReference type="ChEBI" id="CHEBI:29103"/>
    </reaction>
</comment>
<comment type="catalytic activity">
    <reaction evidence="10">
        <text>Rb(+)(in) = Rb(+)(out)</text>
        <dbReference type="Rhea" id="RHEA:78547"/>
        <dbReference type="ChEBI" id="CHEBI:49847"/>
    </reaction>
</comment>
<comment type="catalytic activity">
    <reaction evidence="10">
        <text>Cs(+)(in) = Cs(+)(out)</text>
        <dbReference type="Rhea" id="RHEA:78555"/>
        <dbReference type="ChEBI" id="CHEBI:49547"/>
    </reaction>
</comment>
<comment type="activity regulation">
    <text evidence="6 9 12 14">Activated by mechanical stretch and arachidonic acid.</text>
</comment>
<comment type="subunit">
    <text evidence="2 6 7 8 9">Homodimer; disulfide-linked. Forms heterodimers with other 2-pore domain K(+) channel subunits, such as KCNK2 and KCNK10.</text>
</comment>
<comment type="interaction">
    <interactant intactId="EBI-15965944">
        <id>Q9NYG8-2</id>
    </interactant>
    <interactant intactId="EBI-15965944">
        <id>Q9NYG8-2</id>
        <label>KCNK4</label>
    </interactant>
    <organismsDiffer>false</organismsDiffer>
    <experiments>2</experiments>
</comment>
<comment type="interaction">
    <interactant intactId="EBI-15965944">
        <id>Q9NYG8-2</id>
    </interactant>
    <interactant intactId="EBI-1054848">
        <id>Q9P0S3</id>
        <label>ORMDL1</label>
    </interactant>
    <organismsDiffer>false</organismsDiffer>
    <experiments>3</experiments>
</comment>
<comment type="subcellular location">
    <subcellularLocation>
        <location evidence="6 7 8 9">Cell membrane</location>
        <topology evidence="6 7 8 9">Multi-pass membrane protein</topology>
    </subcellularLocation>
    <subcellularLocation>
        <location evidence="1">Cell projection</location>
        <location evidence="1">Axon</location>
    </subcellularLocation>
    <text evidence="1">Localizes at the Ranvier nodes of myelinated afferent nerves.</text>
</comment>
<comment type="alternative products">
    <event type="alternative splicing"/>
    <isoform>
        <id>Q9NYG8-1</id>
        <name>1</name>
        <name>KT4.1a</name>
        <sequence type="displayed"/>
    </isoform>
    <isoform>
        <id>Q9NYG8-2</id>
        <name>2</name>
        <name>KT4.1b</name>
        <sequence type="described" ref="VSP_006689"/>
    </isoform>
</comment>
<comment type="domain">
    <text evidence="3">Each subunit contributes two pore-forming domains 1 and 2 which assemble to form a single pore with M2 and M4 transmembrane helices lining the central cavity and M1 and M3 facing the lipid bilayer. The transmembrane helices are bridged by the selectivity filters 1 and 2 carrying a signature sequence TxTTxGYGD that coordinate the permeant ions. Up to four ions can simultaneously occupy the selectivity filter and at least two elementary charges must translocate across the filter to convert it into the open conformation.</text>
</comment>
<comment type="domain">
    <text evidence="8 9">Channel opening is brought about by a conformation change that involves buckling of the second transmembrane helix and affects the position and orientation of the fourth transmembrane helix.</text>
</comment>
<comment type="PTM">
    <text evidence="6">N-glycosylated.</text>
</comment>
<comment type="disease" evidence="12">
    <disease id="DI-05531">
        <name>Facial dysmorphism, hypertrichosis, epilepsy, intellectual and developmental delay, and gingival overgrowth syndrome</name>
        <acronym>FHEIG</acronym>
        <description>An autosomal dominant syndrome characterized by delayed motor and intellectual development, poor speech, seizures, generalized hypertrichosis and facial dysmorphic features, including hypotonic facies, bitemporal narrowing, micrognathia, deep-set eyes, bushy eyebrows and long eyelashes, low-set ears, short deep philtrum, gingival overgrowth, prominent upper and lower vermilion, and everted upper lip.</description>
        <dbReference type="MIM" id="618381"/>
    </disease>
    <text>The disease is caused by variants affecting the gene represented in this entry.</text>
</comment>
<comment type="miscellaneous">
    <molecule>Isoform 2</molecule>
    <text evidence="20">May be produced at very low levels due to a premature stop codon in the mRNA, leading to nonsense-mediated mRNA decay.</text>
</comment>
<comment type="similarity">
    <text evidence="20">Belongs to the two pore domain potassium channel (TC 1.A.1.8) family.</text>
</comment>
<feature type="chain" id="PRO_0000101747" description="Potassium channel subfamily K member 4">
    <location>
        <begin position="1"/>
        <end position="393"/>
    </location>
</feature>
<feature type="topological domain" description="Cytoplasmic" evidence="6 7 8 9">
    <location>
        <begin position="1"/>
        <end position="3"/>
    </location>
</feature>
<feature type="transmembrane region" description="Helical" evidence="6 7 8 9">
    <location>
        <begin position="4"/>
        <end position="24"/>
    </location>
</feature>
<feature type="topological domain" description="Extracellular" evidence="6 7 8 9">
    <location>
        <begin position="25"/>
        <end position="87"/>
    </location>
</feature>
<feature type="intramembrane region" description="Helical; Name=Pore helix 1" evidence="6 7 8 9">
    <location>
        <begin position="88"/>
        <end position="102"/>
    </location>
</feature>
<feature type="intramembrane region" evidence="6 7 8 9">
    <location>
        <begin position="103"/>
        <end position="109"/>
    </location>
</feature>
<feature type="topological domain" description="Extracellular" evidence="6 7 8 9">
    <location>
        <begin position="110"/>
        <end position="117"/>
    </location>
</feature>
<feature type="transmembrane region" description="Helical" evidence="6 7 8 9">
    <location>
        <begin position="118"/>
        <end position="150"/>
    </location>
</feature>
<feature type="topological domain" description="Cytoplasmic" evidence="6 7 8 9">
    <location>
        <begin position="151"/>
        <end position="172"/>
    </location>
</feature>
<feature type="transmembrane region" description="Helical" evidence="6 7 8 9">
    <location>
        <begin position="173"/>
        <end position="194"/>
    </location>
</feature>
<feature type="topological domain" description="Extracellular" evidence="6 7 8 9">
    <location>
        <begin position="195"/>
        <end position="199"/>
    </location>
</feature>
<feature type="intramembrane region" description="Helical; Name=Pore helix 2" evidence="6 7 8 9">
    <location>
        <begin position="200"/>
        <end position="213"/>
    </location>
</feature>
<feature type="intramembrane region" evidence="6 7 8 9">
    <location>
        <begin position="214"/>
        <end position="219"/>
    </location>
</feature>
<feature type="topological domain" description="Extracellular" evidence="6 7 8 9">
    <location>
        <begin position="220"/>
        <end position="233"/>
    </location>
</feature>
<feature type="transmembrane region" description="Helical" evidence="6 7 8 9">
    <location>
        <begin position="234"/>
        <end position="260"/>
    </location>
</feature>
<feature type="topological domain" description="Cytoplasmic" evidence="6 7 8 9">
    <location>
        <begin position="261"/>
        <end position="393"/>
    </location>
</feature>
<feature type="region of interest" description="Selectivity filter 1" evidence="6 7 8 9">
    <location>
        <begin position="103"/>
        <end position="108"/>
    </location>
</feature>
<feature type="region of interest" description="Selectivity filter 2" evidence="6 7 8 9">
    <location>
        <begin position="212"/>
        <end position="217"/>
    </location>
</feature>
<feature type="region of interest" description="Disordered" evidence="5">
    <location>
        <begin position="285"/>
        <end position="393"/>
    </location>
</feature>
<feature type="compositionally biased region" description="Pro residues" evidence="5">
    <location>
        <begin position="319"/>
        <end position="332"/>
    </location>
</feature>
<feature type="compositionally biased region" description="Basic residues" evidence="5">
    <location>
        <begin position="365"/>
        <end position="384"/>
    </location>
</feature>
<feature type="binding site" evidence="8 24">
    <location>
        <position position="103"/>
    </location>
    <ligand>
        <name>K(+)</name>
        <dbReference type="ChEBI" id="CHEBI:29103"/>
        <label>1</label>
    </ligand>
</feature>
<feature type="binding site" evidence="13 25">
    <location>
        <position position="103"/>
    </location>
    <ligand>
        <name>K(+)</name>
        <dbReference type="ChEBI" id="CHEBI:29103"/>
        <label>4</label>
    </ligand>
</feature>
<feature type="binding site" evidence="24">
    <location>
        <position position="104"/>
    </location>
    <ligand>
        <name>K(+)</name>
        <dbReference type="ChEBI" id="CHEBI:29103"/>
        <label>1</label>
    </ligand>
</feature>
<feature type="binding site" evidence="7 8 22 23">
    <location>
        <position position="104"/>
    </location>
    <ligand>
        <name>K(+)</name>
        <dbReference type="ChEBI" id="CHEBI:29103"/>
        <label>2</label>
    </ligand>
</feature>
<feature type="binding site" evidence="8 22 23">
    <location>
        <position position="105"/>
    </location>
    <ligand>
        <name>K(+)</name>
        <dbReference type="ChEBI" id="CHEBI:29103"/>
        <label>2</label>
    </ligand>
</feature>
<feature type="binding site" evidence="3">
    <location>
        <position position="105"/>
    </location>
    <ligand>
        <name>K(+)</name>
        <dbReference type="ChEBI" id="CHEBI:29103"/>
        <label>3</label>
    </ligand>
</feature>
<feature type="binding site" evidence="3">
    <location>
        <position position="106"/>
    </location>
    <ligand>
        <name>K(+)</name>
        <dbReference type="ChEBI" id="CHEBI:29103"/>
        <label>3</label>
    </ligand>
</feature>
<feature type="binding site" evidence="8 24">
    <location>
        <position position="212"/>
    </location>
    <ligand>
        <name>K(+)</name>
        <dbReference type="ChEBI" id="CHEBI:29103"/>
        <label>1</label>
    </ligand>
</feature>
<feature type="binding site" evidence="13 25">
    <location>
        <position position="212"/>
    </location>
    <ligand>
        <name>K(+)</name>
        <dbReference type="ChEBI" id="CHEBI:29103"/>
        <label>4</label>
    </ligand>
</feature>
<feature type="binding site" evidence="8 24">
    <location>
        <position position="213"/>
    </location>
    <ligand>
        <name>K(+)</name>
        <dbReference type="ChEBI" id="CHEBI:29103"/>
        <label>1</label>
    </ligand>
</feature>
<feature type="binding site" evidence="7 8 22 23">
    <location>
        <position position="213"/>
    </location>
    <ligand>
        <name>K(+)</name>
        <dbReference type="ChEBI" id="CHEBI:29103"/>
        <label>2</label>
    </ligand>
</feature>
<feature type="binding site" evidence="8 22 23">
    <location>
        <position position="214"/>
    </location>
    <ligand>
        <name>K(+)</name>
        <dbReference type="ChEBI" id="CHEBI:29103"/>
        <label>2</label>
    </ligand>
</feature>
<feature type="binding site" evidence="3">
    <location>
        <position position="214"/>
    </location>
    <ligand>
        <name>K(+)</name>
        <dbReference type="ChEBI" id="CHEBI:29103"/>
        <label>3</label>
    </ligand>
</feature>
<feature type="binding site" evidence="3">
    <location>
        <position position="215"/>
    </location>
    <ligand>
        <name>K(+)</name>
        <dbReference type="ChEBI" id="CHEBI:29103"/>
        <label>3</label>
    </ligand>
</feature>
<feature type="glycosylation site" description="N-linked (GlcNAc...) asparagine" evidence="4">
    <location>
        <position position="78"/>
    </location>
</feature>
<feature type="glycosylation site" description="N-linked (GlcNAc...) asparagine" evidence="4">
    <location>
        <position position="82"/>
    </location>
</feature>
<feature type="disulfide bond" description="Interchain (with C-52)" evidence="6 7 8 9 13">
    <location>
        <position position="52"/>
    </location>
</feature>
<feature type="splice variant" id="VSP_006689" description="In isoform 2." evidence="16">
    <original>M</original>
    <variation>MTTAPQEPPARPLQAGSGAGPAPGRAM</variation>
    <location>
        <position position="1"/>
    </location>
</feature>
<feature type="sequence variant" id="VAR_082119" description="In FHEIG; gain-of-function variant resulting in highly increased basal potassium currents; impaired sensitivity to arachidonic acid." evidence="12">
    <original>A</original>
    <variation>E</variation>
    <location>
        <position position="172"/>
    </location>
</feature>
<feature type="sequence variant" id="VAR_082120" description="In FHEIG; gain-of-function variant resulting in highly increased basal potassium currents; impaired sensitivity to arachidonic acid." evidence="12">
    <original>A</original>
    <variation>P</variation>
    <location>
        <position position="244"/>
    </location>
</feature>
<feature type="sequence variant" id="VAR_020206" description="In dbSNP:rs953778." evidence="15">
    <original>P</original>
    <variation>L</variation>
    <location>
        <position position="328"/>
    </location>
</feature>
<feature type="mutagenesis site" description="Strongly increases basal level of channel activity, decreases further activation by pressure and abolishes further activation by arachidonic acid." evidence="9">
    <original>G</original>
    <variation>I</variation>
    <location>
        <position position="98"/>
    </location>
</feature>
<feature type="mutagenesis site" description="Loss of voltage-dependent channel gating. Displays linear current-voltage relationship." evidence="10">
    <original>T</original>
    <variation>C</variation>
    <location>
        <position position="103"/>
    </location>
</feature>
<feature type="mutagenesis site" description="Loss of voltage-dependent channel gating. Abolishes activation by arachidonic acid and PIP2." evidence="10">
    <original>T</original>
    <variation>C</variation>
    <location>
        <position position="212"/>
    </location>
</feature>
<feature type="mutagenesis site" description="Gain of a cryptic cation-pi interaction that activates channel gating." evidence="11">
    <original>Q</original>
    <variation>K</variation>
    <location>
        <position position="232"/>
    </location>
</feature>
<feature type="mutagenesis site" description="Increases basal level of channel activity and decreases further activation by pressure, but has little effect on further activation by arachidonic acid." evidence="9">
    <original>W</original>
    <variation>S</variation>
    <location>
        <position position="236"/>
    </location>
</feature>
<feature type="helix" evidence="27">
    <location>
        <begin position="3"/>
        <end position="28"/>
    </location>
</feature>
<feature type="helix" evidence="27">
    <location>
        <begin position="29"/>
        <end position="31"/>
    </location>
</feature>
<feature type="helix" evidence="27">
    <location>
        <begin position="34"/>
        <end position="49"/>
    </location>
</feature>
<feature type="helix" evidence="27">
    <location>
        <begin position="55"/>
        <end position="70"/>
    </location>
</feature>
<feature type="strand" evidence="26">
    <location>
        <begin position="87"/>
        <end position="89"/>
    </location>
</feature>
<feature type="helix" evidence="27">
    <location>
        <begin position="90"/>
        <end position="101"/>
    </location>
</feature>
<feature type="helix" evidence="27">
    <location>
        <begin position="114"/>
        <end position="158"/>
    </location>
</feature>
<feature type="turn" evidence="27">
    <location>
        <begin position="159"/>
        <end position="161"/>
    </location>
</feature>
<feature type="helix" evidence="27">
    <location>
        <begin position="164"/>
        <end position="183"/>
    </location>
</feature>
<feature type="helix" evidence="27">
    <location>
        <begin position="185"/>
        <end position="195"/>
    </location>
</feature>
<feature type="helix" evidence="27">
    <location>
        <begin position="199"/>
        <end position="210"/>
    </location>
</feature>
<feature type="strand" evidence="27">
    <location>
        <begin position="216"/>
        <end position="218"/>
    </location>
</feature>
<feature type="strand" evidence="26">
    <location>
        <begin position="221"/>
        <end position="223"/>
    </location>
</feature>
<feature type="strand" evidence="27">
    <location>
        <begin position="226"/>
        <end position="228"/>
    </location>
</feature>
<feature type="helix" evidence="27">
    <location>
        <begin position="231"/>
        <end position="259"/>
    </location>
</feature>
<gene>
    <name evidence="19 21" type="primary">KCNK4</name>
    <name evidence="17" type="synonym">TRAAK</name>
</gene>
<dbReference type="EMBL" id="AF248242">
    <property type="protein sequence ID" value="AAG31731.1"/>
    <property type="molecule type" value="mRNA"/>
</dbReference>
<dbReference type="EMBL" id="AF247042">
    <property type="protein sequence ID" value="AAF64062.1"/>
    <property type="molecule type" value="mRNA"/>
</dbReference>
<dbReference type="EMBL" id="AF259500">
    <property type="protein sequence ID" value="AAK49389.1"/>
    <property type="molecule type" value="mRNA"/>
</dbReference>
<dbReference type="EMBL" id="AF259501">
    <property type="protein sequence ID" value="AAK49390.1"/>
    <property type="molecule type" value="mRNA"/>
</dbReference>
<dbReference type="EMBL" id="EU978935">
    <property type="protein sequence ID" value="ACH86094.1"/>
    <property type="molecule type" value="mRNA"/>
</dbReference>
<dbReference type="EMBL" id="CH471076">
    <property type="protein sequence ID" value="EAW74242.1"/>
    <property type="molecule type" value="Genomic_DNA"/>
</dbReference>
<dbReference type="CCDS" id="CCDS8067.1">
    <molecule id="Q9NYG8-1"/>
</dbReference>
<dbReference type="RefSeq" id="NP_001304019.1">
    <molecule id="Q9NYG8-1"/>
    <property type="nucleotide sequence ID" value="NM_001317090.2"/>
</dbReference>
<dbReference type="RefSeq" id="NP_201567.1">
    <molecule id="Q9NYG8-1"/>
    <property type="nucleotide sequence ID" value="NM_033310.3"/>
</dbReference>
<dbReference type="PDB" id="3UM7">
    <property type="method" value="X-ray"/>
    <property type="resolution" value="3.31 A"/>
    <property type="chains" value="A/B=1-274"/>
</dbReference>
<dbReference type="PDB" id="4I9W">
    <property type="method" value="X-ray"/>
    <property type="resolution" value="2.75 A"/>
    <property type="chains" value="A/B=1-274"/>
</dbReference>
<dbReference type="PDB" id="4RUE">
    <property type="method" value="X-ray"/>
    <property type="resolution" value="3.30 A"/>
    <property type="chains" value="A/B=1-274"/>
</dbReference>
<dbReference type="PDB" id="4RUF">
    <property type="method" value="X-ray"/>
    <property type="resolution" value="3.40 A"/>
    <property type="chains" value="A/B=1-274"/>
</dbReference>
<dbReference type="PDB" id="4WFE">
    <property type="method" value="X-ray"/>
    <property type="resolution" value="2.50 A"/>
    <property type="chains" value="A/B=1-264"/>
</dbReference>
<dbReference type="PDB" id="4WFF">
    <property type="method" value="X-ray"/>
    <property type="resolution" value="2.50 A"/>
    <property type="chains" value="A/B=1-264"/>
</dbReference>
<dbReference type="PDB" id="4WFG">
    <property type="method" value="X-ray"/>
    <property type="resolution" value="3.00 A"/>
    <property type="chains" value="A/B=1-264"/>
</dbReference>
<dbReference type="PDB" id="4WFH">
    <property type="method" value="X-ray"/>
    <property type="resolution" value="3.01 A"/>
    <property type="chains" value="A/B=1-264"/>
</dbReference>
<dbReference type="PDB" id="7LJ4">
    <property type="method" value="X-ray"/>
    <property type="resolution" value="2.78 A"/>
    <property type="chains" value="A/B=1-264"/>
</dbReference>
<dbReference type="PDB" id="7LJ5">
    <property type="method" value="X-ray"/>
    <property type="resolution" value="2.26 A"/>
    <property type="chains" value="A/B=1-264"/>
</dbReference>
<dbReference type="PDB" id="7LJA">
    <property type="method" value="X-ray"/>
    <property type="resolution" value="2.77 A"/>
    <property type="chains" value="A/B=1-264"/>
</dbReference>
<dbReference type="PDB" id="7LJB">
    <property type="method" value="X-ray"/>
    <property type="resolution" value="2.97 A"/>
    <property type="chains" value="A/B=1-264"/>
</dbReference>
<dbReference type="PDBsum" id="3UM7"/>
<dbReference type="PDBsum" id="4I9W"/>
<dbReference type="PDBsum" id="4RUE"/>
<dbReference type="PDBsum" id="4RUF"/>
<dbReference type="PDBsum" id="4WFE"/>
<dbReference type="PDBsum" id="4WFF"/>
<dbReference type="PDBsum" id="4WFG"/>
<dbReference type="PDBsum" id="4WFH"/>
<dbReference type="PDBsum" id="7LJ4"/>
<dbReference type="PDBsum" id="7LJ5"/>
<dbReference type="PDBsum" id="7LJA"/>
<dbReference type="PDBsum" id="7LJB"/>
<dbReference type="SMR" id="Q9NYG8"/>
<dbReference type="BioGRID" id="119122">
    <property type="interactions" value="10"/>
</dbReference>
<dbReference type="DIP" id="DIP-61343N"/>
<dbReference type="FunCoup" id="Q9NYG8">
    <property type="interactions" value="20"/>
</dbReference>
<dbReference type="IntAct" id="Q9NYG8">
    <property type="interactions" value="9"/>
</dbReference>
<dbReference type="STRING" id="9606.ENSP00000402797"/>
<dbReference type="BindingDB" id="Q9NYG8"/>
<dbReference type="ChEMBL" id="CHEMBL3714486"/>
<dbReference type="GlyCosmos" id="Q9NYG8">
    <property type="glycosylation" value="2 sites, No reported glycans"/>
</dbReference>
<dbReference type="GlyGen" id="Q9NYG8">
    <property type="glycosylation" value="2 sites"/>
</dbReference>
<dbReference type="iPTMnet" id="Q9NYG8"/>
<dbReference type="PhosphoSitePlus" id="Q9NYG8"/>
<dbReference type="BioMuta" id="KCNK4"/>
<dbReference type="DMDM" id="13124080"/>
<dbReference type="MassIVE" id="Q9NYG8"/>
<dbReference type="PaxDb" id="9606-ENSP00000444948"/>
<dbReference type="PeptideAtlas" id="Q9NYG8"/>
<dbReference type="ABCD" id="Q9NYG8">
    <property type="antibodies" value="1 sequenced antibody"/>
</dbReference>
<dbReference type="Antibodypedia" id="29251">
    <property type="antibodies" value="150 antibodies from 28 providers"/>
</dbReference>
<dbReference type="DNASU" id="50801"/>
<dbReference type="Ensembl" id="ENST00000394525.6">
    <molecule id="Q9NYG8-1"/>
    <property type="protein sequence ID" value="ENSP00000378033.2"/>
    <property type="gene ID" value="ENSG00000182450.14"/>
</dbReference>
<dbReference type="Ensembl" id="ENST00000422670.7">
    <molecule id="Q9NYG8-1"/>
    <property type="protein sequence ID" value="ENSP00000402797.2"/>
    <property type="gene ID" value="ENSG00000182450.14"/>
</dbReference>
<dbReference type="Ensembl" id="ENST00000539216.1">
    <molecule id="Q9NYG8-1"/>
    <property type="protein sequence ID" value="ENSP00000444948.1"/>
    <property type="gene ID" value="ENSG00000182450.14"/>
</dbReference>
<dbReference type="Ensembl" id="ENST00000696753.1">
    <molecule id="Q9NYG8-2"/>
    <property type="protein sequence ID" value="ENSP00000512851.1"/>
    <property type="gene ID" value="ENSG00000182450.14"/>
</dbReference>
<dbReference type="GeneID" id="50801"/>
<dbReference type="KEGG" id="hsa:50801"/>
<dbReference type="MANE-Select" id="ENST00000422670.7">
    <property type="protein sequence ID" value="ENSP00000402797.2"/>
    <property type="RefSeq nucleotide sequence ID" value="NM_033310.3"/>
    <property type="RefSeq protein sequence ID" value="NP_201567.1"/>
</dbReference>
<dbReference type="UCSC" id="uc001nzj.2">
    <molecule id="Q9NYG8-1"/>
    <property type="organism name" value="human"/>
</dbReference>
<dbReference type="AGR" id="HGNC:6279"/>
<dbReference type="CTD" id="50801"/>
<dbReference type="DisGeNET" id="50801"/>
<dbReference type="GeneCards" id="KCNK4"/>
<dbReference type="HGNC" id="HGNC:6279">
    <property type="gene designation" value="KCNK4"/>
</dbReference>
<dbReference type="HPA" id="ENSG00000182450">
    <property type="expression patterns" value="Tissue enriched (brain)"/>
</dbReference>
<dbReference type="MalaCards" id="KCNK4"/>
<dbReference type="MIM" id="605720">
    <property type="type" value="gene"/>
</dbReference>
<dbReference type="MIM" id="618381">
    <property type="type" value="phenotype"/>
</dbReference>
<dbReference type="neXtProt" id="NX_Q9NYG8"/>
<dbReference type="OpenTargets" id="ENSG00000182450"/>
<dbReference type="Orphanet" id="598603">
    <property type="disease" value="Facial dysmorphism-hypertrichosis-epilepsy-intellectual disability/developmental delay-gingival overgrowth syndrome"/>
</dbReference>
<dbReference type="PharmGKB" id="PA30061"/>
<dbReference type="VEuPathDB" id="HostDB:ENSG00000182450"/>
<dbReference type="eggNOG" id="KOG1418">
    <property type="taxonomic scope" value="Eukaryota"/>
</dbReference>
<dbReference type="GeneTree" id="ENSGT00940000160310"/>
<dbReference type="HOGENOM" id="CLU_022504_1_1_1"/>
<dbReference type="InParanoid" id="Q9NYG8"/>
<dbReference type="OMA" id="VFLKWHV"/>
<dbReference type="OrthoDB" id="297496at2759"/>
<dbReference type="PAN-GO" id="Q9NYG8">
    <property type="GO annotations" value="5 GO annotations based on evolutionary models"/>
</dbReference>
<dbReference type="PhylomeDB" id="Q9NYG8"/>
<dbReference type="TreeFam" id="TF313947"/>
<dbReference type="PathwayCommons" id="Q9NYG8"/>
<dbReference type="Reactome" id="R-HSA-1299503">
    <property type="pathway name" value="TWIK related potassium channel (TREK)"/>
</dbReference>
<dbReference type="Reactome" id="R-HSA-5576886">
    <property type="pathway name" value="Phase 4 - resting membrane potential"/>
</dbReference>
<dbReference type="SignaLink" id="Q9NYG8"/>
<dbReference type="BioGRID-ORCS" id="50801">
    <property type="hits" value="49 hits in 1154 CRISPR screens"/>
</dbReference>
<dbReference type="EvolutionaryTrace" id="Q9NYG8"/>
<dbReference type="GeneWiki" id="KCNK4"/>
<dbReference type="GenomeRNAi" id="50801"/>
<dbReference type="Pharos" id="Q9NYG8">
    <property type="development level" value="Tbio"/>
</dbReference>
<dbReference type="PRO" id="PR:Q9NYG8"/>
<dbReference type="Proteomes" id="UP000005640">
    <property type="component" value="Chromosome 11"/>
</dbReference>
<dbReference type="RNAct" id="Q9NYG8">
    <property type="molecule type" value="protein"/>
</dbReference>
<dbReference type="Bgee" id="ENSG00000182450">
    <property type="expression patterns" value="Expressed in nucleus accumbens and 49 other cell types or tissues"/>
</dbReference>
<dbReference type="ExpressionAtlas" id="Q9NYG8">
    <property type="expression patterns" value="baseline and differential"/>
</dbReference>
<dbReference type="GO" id="GO:0033268">
    <property type="term" value="C:node of Ranvier"/>
    <property type="evidence" value="ECO:0000250"/>
    <property type="project" value="UniProtKB"/>
</dbReference>
<dbReference type="GO" id="GO:0005886">
    <property type="term" value="C:plasma membrane"/>
    <property type="evidence" value="ECO:0000315"/>
    <property type="project" value="UniProtKB"/>
</dbReference>
<dbReference type="GO" id="GO:0034705">
    <property type="term" value="C:potassium channel complex"/>
    <property type="evidence" value="ECO:0000314"/>
    <property type="project" value="UniProtKB"/>
</dbReference>
<dbReference type="GO" id="GO:0042802">
    <property type="term" value="F:identical protein binding"/>
    <property type="evidence" value="ECO:0000353"/>
    <property type="project" value="IntAct"/>
</dbReference>
<dbReference type="GO" id="GO:0098782">
    <property type="term" value="F:mechanosensitive potassium channel activity"/>
    <property type="evidence" value="ECO:0000314"/>
    <property type="project" value="UniProtKB"/>
</dbReference>
<dbReference type="GO" id="GO:0046872">
    <property type="term" value="F:metal ion binding"/>
    <property type="evidence" value="ECO:0007669"/>
    <property type="project" value="UniProtKB-KW"/>
</dbReference>
<dbReference type="GO" id="GO:0015271">
    <property type="term" value="F:outward rectifier potassium channel activity"/>
    <property type="evidence" value="ECO:0000314"/>
    <property type="project" value="UniProtKB"/>
</dbReference>
<dbReference type="GO" id="GO:0005267">
    <property type="term" value="F:potassium channel activity"/>
    <property type="evidence" value="ECO:0000314"/>
    <property type="project" value="UniProtKB"/>
</dbReference>
<dbReference type="GO" id="GO:0022841">
    <property type="term" value="F:potassium ion leak channel activity"/>
    <property type="evidence" value="ECO:0000314"/>
    <property type="project" value="UniProtKB"/>
</dbReference>
<dbReference type="GO" id="GO:0097604">
    <property type="term" value="F:temperature-gated cation channel activity"/>
    <property type="evidence" value="ECO:0000250"/>
    <property type="project" value="UniProtKB"/>
</dbReference>
<dbReference type="GO" id="GO:0071468">
    <property type="term" value="P:cellular response to acidic pH"/>
    <property type="evidence" value="ECO:0000314"/>
    <property type="project" value="UniProtKB"/>
</dbReference>
<dbReference type="GO" id="GO:0071469">
    <property type="term" value="P:cellular response to alkaline pH"/>
    <property type="evidence" value="ECO:0000250"/>
    <property type="project" value="UniProtKB"/>
</dbReference>
<dbReference type="GO" id="GO:1904551">
    <property type="term" value="P:cellular response to arachidonate"/>
    <property type="evidence" value="ECO:0000314"/>
    <property type="project" value="UniProtKB"/>
</dbReference>
<dbReference type="GO" id="GO:0071398">
    <property type="term" value="P:cellular response to fatty acid"/>
    <property type="evidence" value="ECO:0000314"/>
    <property type="project" value="UniProtKB"/>
</dbReference>
<dbReference type="GO" id="GO:0071260">
    <property type="term" value="P:cellular response to mechanical stimulus"/>
    <property type="evidence" value="ECO:0000314"/>
    <property type="project" value="UniProtKB"/>
</dbReference>
<dbReference type="GO" id="GO:0071502">
    <property type="term" value="P:cellular response to temperature stimulus"/>
    <property type="evidence" value="ECO:0000250"/>
    <property type="project" value="UniProtKB"/>
</dbReference>
<dbReference type="GO" id="GO:0050976">
    <property type="term" value="P:detection of mechanical stimulus involved in sensory perception of touch"/>
    <property type="evidence" value="ECO:0000250"/>
    <property type="project" value="UniProtKB"/>
</dbReference>
<dbReference type="GO" id="GO:0007613">
    <property type="term" value="P:memory"/>
    <property type="evidence" value="ECO:0007669"/>
    <property type="project" value="Ensembl"/>
</dbReference>
<dbReference type="GO" id="GO:0019228">
    <property type="term" value="P:neuronal action potential"/>
    <property type="evidence" value="ECO:0000250"/>
    <property type="project" value="UniProtKB"/>
</dbReference>
<dbReference type="GO" id="GO:0071805">
    <property type="term" value="P:potassium ion transmembrane transport"/>
    <property type="evidence" value="ECO:0000314"/>
    <property type="project" value="UniProtKB"/>
</dbReference>
<dbReference type="GO" id="GO:0006813">
    <property type="term" value="P:potassium ion transport"/>
    <property type="evidence" value="ECO:0000304"/>
    <property type="project" value="ProtInc"/>
</dbReference>
<dbReference type="GO" id="GO:1990478">
    <property type="term" value="P:response to ultrasound"/>
    <property type="evidence" value="ECO:0000314"/>
    <property type="project" value="UniProtKB"/>
</dbReference>
<dbReference type="GO" id="GO:0019233">
    <property type="term" value="P:sensory perception of pain"/>
    <property type="evidence" value="ECO:0000250"/>
    <property type="project" value="UniProtKB"/>
</dbReference>
<dbReference type="GO" id="GO:0050951">
    <property type="term" value="P:sensory perception of temperature stimulus"/>
    <property type="evidence" value="ECO:0000250"/>
    <property type="project" value="UniProtKB"/>
</dbReference>
<dbReference type="FunFam" id="1.10.287.70:FF:000106">
    <property type="entry name" value="Potassium channel subfamily K member 4"/>
    <property type="match status" value="1"/>
</dbReference>
<dbReference type="Gene3D" id="1.10.287.70">
    <property type="match status" value="1"/>
</dbReference>
<dbReference type="InterPro" id="IPR003280">
    <property type="entry name" value="2pore_dom_K_chnl"/>
</dbReference>
<dbReference type="InterPro" id="IPR008074">
    <property type="entry name" value="2pore_dom_K_chnl_TRAAK"/>
</dbReference>
<dbReference type="InterPro" id="IPR013099">
    <property type="entry name" value="K_chnl_dom"/>
</dbReference>
<dbReference type="PANTHER" id="PTHR11003:SF30">
    <property type="entry name" value="POTASSIUM CHANNEL SUBFAMILY K MEMBER 4"/>
    <property type="match status" value="1"/>
</dbReference>
<dbReference type="PANTHER" id="PTHR11003">
    <property type="entry name" value="POTASSIUM CHANNEL, SUBFAMILY K"/>
    <property type="match status" value="1"/>
</dbReference>
<dbReference type="Pfam" id="PF07885">
    <property type="entry name" value="Ion_trans_2"/>
    <property type="match status" value="2"/>
</dbReference>
<dbReference type="PRINTS" id="PR01333">
    <property type="entry name" value="2POREKCHANEL"/>
</dbReference>
<dbReference type="PRINTS" id="PR01691">
    <property type="entry name" value="TRAAKCHANNEL"/>
</dbReference>
<dbReference type="SUPFAM" id="SSF81324">
    <property type="entry name" value="Voltage-gated potassium channels"/>
    <property type="match status" value="2"/>
</dbReference>
<keyword id="KW-0002">3D-structure</keyword>
<keyword id="KW-0025">Alternative splicing</keyword>
<keyword id="KW-1003">Cell membrane</keyword>
<keyword id="KW-0966">Cell projection</keyword>
<keyword id="KW-0225">Disease variant</keyword>
<keyword id="KW-1015">Disulfide bond</keyword>
<keyword id="KW-0887">Epilepsy</keyword>
<keyword id="KW-0325">Glycoprotein</keyword>
<keyword id="KW-0991">Intellectual disability</keyword>
<keyword id="KW-0407">Ion channel</keyword>
<keyword id="KW-0406">Ion transport</keyword>
<keyword id="KW-0472">Membrane</keyword>
<keyword id="KW-0479">Metal-binding</keyword>
<keyword id="KW-0630">Potassium</keyword>
<keyword id="KW-0631">Potassium channel</keyword>
<keyword id="KW-0633">Potassium transport</keyword>
<keyword id="KW-1267">Proteomics identification</keyword>
<keyword id="KW-1185">Reference proteome</keyword>
<keyword id="KW-0812">Transmembrane</keyword>
<keyword id="KW-1133">Transmembrane helix</keyword>
<keyword id="KW-0813">Transport</keyword>
<keyword id="KW-0851">Voltage-gated channel</keyword>
<reference key="1">
    <citation type="journal article" date="2000" name="Brain Res. Mol. Brain Res.">
        <title>Cloning, localisation and functional expression of a novel human, cerebellum specific, two pore domain potassium channel.</title>
        <authorList>
            <person name="Chapman C.G."/>
            <person name="Meadows H.J."/>
            <person name="Godden R.J."/>
            <person name="Campbell D.A."/>
            <person name="Duckworth M."/>
            <person name="Kelsell R.E."/>
            <person name="Murdock P.R."/>
            <person name="Randall A.D."/>
            <person name="Rennie G.I."/>
            <person name="Gloger I.S."/>
        </authorList>
    </citation>
    <scope>NUCLEOTIDE SEQUENCE [MRNA] (ISOFORM 1)</scope>
    <source>
        <tissue>Brain</tissue>
    </source>
</reference>
<reference key="2">
    <citation type="submission" date="2000-03" db="EMBL/GenBank/DDBJ databases">
        <title>Assignment of KCNK4 encoding the human potassium channel TRAAK to chromosome 11.</title>
        <authorList>
            <person name="Gray A.T."/>
        </authorList>
    </citation>
    <scope>NUCLEOTIDE SEQUENCE [MRNA] (ISOFORM 1)</scope>
    <scope>VARIANT LEU-328</scope>
    <source>
        <tissue>Frontal cortex</tissue>
    </source>
</reference>
<reference key="3">
    <citation type="journal article" date="2000" name="FEBS Lett.">
        <title>Cloning and expression of human TRAAK, a polyunsaturated fatty acids-activated and mechano-sensitive K(+) channel.</title>
        <authorList>
            <person name="Lesage F."/>
            <person name="Maingret F."/>
            <person name="Lazdunski M."/>
        </authorList>
    </citation>
    <scope>NUCLEOTIDE SEQUENCE [MRNA] (ISOFORM 1)</scope>
</reference>
<reference key="4">
    <citation type="journal article" date="2002" name="Brain Res. Mol. Brain Res.">
        <title>Cloning of two transcripts, HKT4.1a and HKT4.1b, from the human two-pore K+ channel gene KCNK4. Chromosomal localization, tissue distribution and functional expression.</title>
        <authorList>
            <person name="Ozaita A."/>
            <person name="Vega-Saenz de Miera E."/>
        </authorList>
    </citation>
    <scope>NUCLEOTIDE SEQUENCE [MRNA] (ISOFORMS 1 AND 2)</scope>
</reference>
<reference key="5">
    <citation type="journal article" date="2006" name="Nature">
        <title>Human chromosome 11 DNA sequence and analysis including novel gene identification.</title>
        <authorList>
            <person name="Taylor T.D."/>
            <person name="Noguchi H."/>
            <person name="Totoki Y."/>
            <person name="Toyoda A."/>
            <person name="Kuroki Y."/>
            <person name="Dewar K."/>
            <person name="Lloyd C."/>
            <person name="Itoh T."/>
            <person name="Takeda T."/>
            <person name="Kim D.-W."/>
            <person name="She X."/>
            <person name="Barlow K.F."/>
            <person name="Bloom T."/>
            <person name="Bruford E."/>
            <person name="Chang J.L."/>
            <person name="Cuomo C.A."/>
            <person name="Eichler E."/>
            <person name="FitzGerald M.G."/>
            <person name="Jaffe D.B."/>
            <person name="LaButti K."/>
            <person name="Nicol R."/>
            <person name="Park H.-S."/>
            <person name="Seaman C."/>
            <person name="Sougnez C."/>
            <person name="Yang X."/>
            <person name="Zimmer A.R."/>
            <person name="Zody M.C."/>
            <person name="Birren B.W."/>
            <person name="Nusbaum C."/>
            <person name="Fujiyama A."/>
            <person name="Hattori M."/>
            <person name="Rogers J."/>
            <person name="Lander E.S."/>
            <person name="Sakaki Y."/>
        </authorList>
    </citation>
    <scope>NUCLEOTIDE SEQUENCE [LARGE SCALE GENOMIC DNA] (ISOFORM 1)</scope>
</reference>
<reference key="6">
    <citation type="submission" date="2005-07" db="EMBL/GenBank/DDBJ databases">
        <authorList>
            <person name="Mural R.J."/>
            <person name="Istrail S."/>
            <person name="Sutton G.G."/>
            <person name="Florea L."/>
            <person name="Halpern A.L."/>
            <person name="Mobarry C.M."/>
            <person name="Lippert R."/>
            <person name="Walenz B."/>
            <person name="Shatkay H."/>
            <person name="Dew I."/>
            <person name="Miller J.R."/>
            <person name="Flanigan M.J."/>
            <person name="Edwards N.J."/>
            <person name="Bolanos R."/>
            <person name="Fasulo D."/>
            <person name="Halldorsson B.V."/>
            <person name="Hannenhalli S."/>
            <person name="Turner R."/>
            <person name="Yooseph S."/>
            <person name="Lu F."/>
            <person name="Nusskern D.R."/>
            <person name="Shue B.C."/>
            <person name="Zheng X.H."/>
            <person name="Zhong F."/>
            <person name="Delcher A.L."/>
            <person name="Huson D.H."/>
            <person name="Kravitz S.A."/>
            <person name="Mouchard L."/>
            <person name="Reinert K."/>
            <person name="Remington K.A."/>
            <person name="Clark A.G."/>
            <person name="Waterman M.S."/>
            <person name="Eichler E.E."/>
            <person name="Adams M.D."/>
            <person name="Hunkapiller M.W."/>
            <person name="Myers E.W."/>
            <person name="Venter J.C."/>
        </authorList>
    </citation>
    <scope>NUCLEOTIDE SEQUENCE [LARGE SCALE GENOMIC DNA]</scope>
</reference>
<reference key="7">
    <citation type="journal article" date="2004" name="Genome Biol.">
        <title>An unappreciated role for RNA surveillance.</title>
        <authorList>
            <person name="Hillman R.T."/>
            <person name="Green R.E."/>
            <person name="Brenner S.E."/>
        </authorList>
    </citation>
    <scope>SPLICE ISOFORM(S) THAT ARE POTENTIAL NMD TARGET(S)</scope>
</reference>
<reference key="8">
    <citation type="journal article" date="2016" name="Cell">
        <title>A Non-canonical Voltage-Sensing Mechanism Controls Gating in K2P K(+) Channels.</title>
        <authorList>
            <person name="Schewe M."/>
            <person name="Nematian-Ardestani E."/>
            <person name="Sun H."/>
            <person name="Musinszki M."/>
            <person name="Cordeiro S."/>
            <person name="Bucci G."/>
            <person name="de Groot B.L."/>
            <person name="Tucker S.J."/>
            <person name="Rapedius M."/>
            <person name="Baukrowitz T."/>
        </authorList>
    </citation>
    <scope>FUNCTION</scope>
    <scope>TRANSPORTER ACTIVITY</scope>
    <scope>REACTION MECHANISM</scope>
    <scope>MUTAGENESIS OF THR-103 AND THR-212</scope>
</reference>
<reference key="9">
    <citation type="journal article" date="2017" name="Nature">
        <title>K2P2.1 (TREK-1)-activator complexes reveal a cryptic selectivity filter binding site.</title>
        <authorList>
            <person name="Lolicato M."/>
            <person name="Arrigoni C."/>
            <person name="Mori T."/>
            <person name="Sekioka Y."/>
            <person name="Bryant C."/>
            <person name="Clark K.A."/>
            <person name="Minor D.L."/>
        </authorList>
    </citation>
    <scope>MUTAGENESIS OF GLN-232</scope>
</reference>
<reference key="10">
    <citation type="journal article" date="2024" name="Nat. Commun.">
        <title>Tension activation of mechanosensitive two-pore domain K+ channels TRAAK, TREK-1, and TREK-2.</title>
        <authorList>
            <person name="Sorum B."/>
            <person name="Docter T."/>
            <person name="Panico V."/>
            <person name="Rietmeijer R.A."/>
            <person name="Brohawn S.G."/>
        </authorList>
    </citation>
    <scope>FUNCTION</scope>
    <scope>TRANSPORTER ACTIVITY</scope>
    <scope>ACTIVITY REGULATION</scope>
</reference>
<reference key="11">
    <citation type="journal article" date="2018" name="Am. J. Hum. Genet.">
        <title>Mutations in KCNK4 that affect gating cause a recognizable neurodevelopmental syndrome.</title>
        <authorList>
            <person name="Bauer C.K."/>
            <person name="Calligari P."/>
            <person name="Radio F.C."/>
            <person name="Caputo V."/>
            <person name="Dentici M.L."/>
            <person name="Falah N."/>
            <person name="High F."/>
            <person name="Pantaleoni F."/>
            <person name="Barresi S."/>
            <person name="Ciolfi A."/>
            <person name="Pizzi S."/>
            <person name="Bruselles A."/>
            <person name="Person R."/>
            <person name="Richards S."/>
            <person name="Cho M.T."/>
            <person name="Claps Sepulveda D.J."/>
            <person name="Pro S."/>
            <person name="Battini R."/>
            <person name="Zampino G."/>
            <person name="Digilio M.C."/>
            <person name="Bocchinfuso G."/>
            <person name="Dallapiccola B."/>
            <person name="Stella L."/>
            <person name="Tartaglia M."/>
        </authorList>
    </citation>
    <scope>FUNCTION</scope>
    <scope>ACTIVITY REGULATION</scope>
    <scope>INVOLVEMENT IN FHEIG</scope>
    <scope>VARIANTS FHEIG GLU-172 AND PRO-244</scope>
    <scope>CHARACTERIZATION OF VARIANTS FHEIG GLU-172 AND PRO-244</scope>
</reference>
<reference key="12">
    <citation type="journal article" date="2012" name="Science">
        <title>Crystal structure of the human K2P TRAAK, a lipid- and mechano-sensitive K+ ion channel.</title>
        <authorList>
            <person name="Brohawn S.G."/>
            <person name="del Marmol J."/>
            <person name="MacKinnon R."/>
        </authorList>
    </citation>
    <scope>X-RAY CRYSTALLOGRAPHY (3.31 ANGSTROMS) OF 1-274</scope>
    <scope>FUNCTION</scope>
    <scope>TRANSPORTER ACTIVITY</scope>
    <scope>ACTIVITY REGULATION</scope>
    <scope>SUBUNIT</scope>
    <scope>SUBCELLULAR LOCATION</scope>
    <scope>TOPOLOGY</scope>
    <scope>GLYCOSYLATION</scope>
    <scope>DISULFIDE BOND</scope>
</reference>
<reference key="13">
    <citation type="journal article" date="2013" name="Proc. Natl. Acad. Sci. U.S.A.">
        <title>Domain-swapped chain connectivity and gated membrane access in a Fab-mediated crystal of the human TRAAK K+ channel.</title>
        <authorList>
            <person name="Brohawn S.G."/>
            <person name="Campbell E.B."/>
            <person name="MacKinnon R."/>
        </authorList>
    </citation>
    <scope>X-RAY CRYSTALLOGRAPHY (2.75 ANGSTROMS) OF 1-274 IN COMPLEX WITH K(+)</scope>
    <scope>SUBCELLULAR LOCATION</scope>
    <scope>SUBUNIT</scope>
    <scope>TOPOLOGY</scope>
    <scope>DISULFIDE BOND</scope>
</reference>
<reference key="14">
    <citation type="journal article" date="2014" name="Nature">
        <title>Physical mechanism for gating and mechanosensitivity of the human TRAAK K+ channel.</title>
        <authorList>
            <person name="Brohawn S.G."/>
            <person name="Campbell E.B."/>
            <person name="MacKinnon R."/>
        </authorList>
    </citation>
    <scope>X-RAY CRYSTALLOGRAPHY (2.50 ANGSTROMS) OF 1-264 IN COMPLEX WITH K(+)</scope>
    <scope>FUNCTION</scope>
    <scope>SUBCELLULAR LOCATION</scope>
    <scope>SUBUNIT</scope>
    <scope>TOPOLOGY</scope>
    <scope>DISULFIDE BOND</scope>
    <scope>DOMAIN</scope>
</reference>
<reference key="15">
    <citation type="journal article" date="2014" name="Neuron">
        <title>Transmembrane helix straightening and buckling underlies activation of mechanosensitive and thermosensitive K(2P) channels.</title>
        <authorList>
            <person name="Lolicato M."/>
            <person name="Riegelhaupt P.M."/>
            <person name="Arrigoni C."/>
            <person name="Clark K.A."/>
            <person name="Minor D.L. Jr."/>
        </authorList>
    </citation>
    <scope>X-RAY CRYSTALLOGRAPHY (3.30 ANGSTROMS) OF 1-274 OF MUTANTS ILE-98 AND SER-236</scope>
    <scope>FUNCTION</scope>
    <scope>ACTIVITY REGULATION</scope>
    <scope>SUBCELLULAR LOCATION</scope>
    <scope>SUBUNIT</scope>
    <scope>TOPOLOGY</scope>
    <scope>DISULFIDE BOND</scope>
    <scope>DOMAIN</scope>
    <scope>MUTAGENESIS OF GLY-98 AND TRP-236</scope>
</reference>
<reference key="16">
    <citation type="journal article" date="2021" name="Neuron">
        <title>Physical basis for distinct basal and mechanically gated activity of the human K+ channel TRAAK.</title>
        <authorList>
            <person name="Rietmeijer R.A."/>
            <person name="Sorum B."/>
            <person name="Li B."/>
            <person name="Brohawn S.G."/>
        </authorList>
    </citation>
    <scope>X-RAY CRYSTALLOGRAPHY (2.26 ANGSTROMS) OF 1-264 IN COMPLEX WITH K(+)</scope>
    <scope>DISULFIDE BONDS</scope>
</reference>
<sequence>MRSTTLLALLALVLLYLVSGALVFRALEQPHEQQAQRELGEVREKFLRAHPCVSDQELGLLIKEVADALGGGADPETNSTSNSSHSAWDLGSAFFFSGTIITTIGYGNVALRTDAGRLFCIFYALVGIPLFGILLAGVGDRLGSSLRHGIGHIEAIFLKWHVPPELVRVLSAMLFLLIGCLLFVLTPTFVFCYMEDWSKLEAIYFVIVTLTTVGFGDYVAGADPRQDSPAYQPLVWFWILLGLAYFASVLTTIGNWLRVVSRRTRAEMGGLTAQAASWTGTVTARVTQRAGPAAPPPEKEQPLLPPPPCPAQPLGRPRSPSPPEKAQPPSPPTASALDYPSENLAFIDESSDTQSERGCPLPRAPRGRRRPNPPRKPVRPRGPGRPRDKGVPV</sequence>
<protein>
    <recommendedName>
        <fullName>Potassium channel subfamily K member 4</fullName>
    </recommendedName>
    <alternativeName>
        <fullName evidence="17">TWIK-related arachidonic acid-stimulated potassium channel protein</fullName>
        <shortName evidence="17">TRAAK</shortName>
    </alternativeName>
    <alternativeName>
        <fullName>Two pore potassium channel KT4.1</fullName>
        <shortName evidence="18">K2P4.1</shortName>
        <shortName>Two pore K(+) channel KT4.1</shortName>
    </alternativeName>
</protein>
<accession>Q9NYG8</accession>
<accession>B5TJL1</accession>
<accession>Q96T94</accession>
<evidence type="ECO:0000250" key="1">
    <source>
        <dbReference type="UniProtKB" id="G3V8V5"/>
    </source>
</evidence>
<evidence type="ECO:0000250" key="2">
    <source>
        <dbReference type="UniProtKB" id="O88454"/>
    </source>
</evidence>
<evidence type="ECO:0000250" key="3">
    <source>
        <dbReference type="UniProtKB" id="P57789"/>
    </source>
</evidence>
<evidence type="ECO:0000255" key="4"/>
<evidence type="ECO:0000256" key="5">
    <source>
        <dbReference type="SAM" id="MobiDB-lite"/>
    </source>
</evidence>
<evidence type="ECO:0000269" key="6">
    <source>
    </source>
</evidence>
<evidence type="ECO:0000269" key="7">
    <source>
    </source>
</evidence>
<evidence type="ECO:0000269" key="8">
    <source>
    </source>
</evidence>
<evidence type="ECO:0000269" key="9">
    <source>
    </source>
</evidence>
<evidence type="ECO:0000269" key="10">
    <source>
    </source>
</evidence>
<evidence type="ECO:0000269" key="11">
    <source>
    </source>
</evidence>
<evidence type="ECO:0000269" key="12">
    <source>
    </source>
</evidence>
<evidence type="ECO:0000269" key="13">
    <source>
    </source>
</evidence>
<evidence type="ECO:0000269" key="14">
    <source>
    </source>
</evidence>
<evidence type="ECO:0000269" key="15">
    <source ref="2"/>
</evidence>
<evidence type="ECO:0000303" key="16">
    <source>
    </source>
</evidence>
<evidence type="ECO:0000303" key="17">
    <source>
    </source>
</evidence>
<evidence type="ECO:0000303" key="18">
    <source>
    </source>
</evidence>
<evidence type="ECO:0000303" key="19">
    <source ref="2"/>
</evidence>
<evidence type="ECO:0000305" key="20"/>
<evidence type="ECO:0000312" key="21">
    <source>
        <dbReference type="HGNC" id="HGNC:6279"/>
    </source>
</evidence>
<evidence type="ECO:0007744" key="22">
    <source>
        <dbReference type="PDB" id="4I9W"/>
    </source>
</evidence>
<evidence type="ECO:0007744" key="23">
    <source>
        <dbReference type="PDB" id="4WFE"/>
    </source>
</evidence>
<evidence type="ECO:0007744" key="24">
    <source>
        <dbReference type="PDB" id="4WFF"/>
    </source>
</evidence>
<evidence type="ECO:0007744" key="25">
    <source>
        <dbReference type="PDB" id="7LJ5"/>
    </source>
</evidence>
<evidence type="ECO:0007829" key="26">
    <source>
        <dbReference type="PDB" id="4WFE"/>
    </source>
</evidence>
<evidence type="ECO:0007829" key="27">
    <source>
        <dbReference type="PDB" id="7LJ5"/>
    </source>
</evidence>
<name>KCNK4_HUMAN</name>